<organism>
    <name type="scientific">Bacillus mycoides (strain KBAB4)</name>
    <name type="common">Bacillus weihenstephanensis</name>
    <dbReference type="NCBI Taxonomy" id="315730"/>
    <lineage>
        <taxon>Bacteria</taxon>
        <taxon>Bacillati</taxon>
        <taxon>Bacillota</taxon>
        <taxon>Bacilli</taxon>
        <taxon>Bacillales</taxon>
        <taxon>Bacillaceae</taxon>
        <taxon>Bacillus</taxon>
        <taxon>Bacillus cereus group</taxon>
    </lineage>
</organism>
<reference key="1">
    <citation type="journal article" date="2008" name="Chem. Biol. Interact.">
        <title>Extending the Bacillus cereus group genomics to putative food-borne pathogens of different toxicity.</title>
        <authorList>
            <person name="Lapidus A."/>
            <person name="Goltsman E."/>
            <person name="Auger S."/>
            <person name="Galleron N."/>
            <person name="Segurens B."/>
            <person name="Dossat C."/>
            <person name="Land M.L."/>
            <person name="Broussolle V."/>
            <person name="Brillard J."/>
            <person name="Guinebretiere M.-H."/>
            <person name="Sanchis V."/>
            <person name="Nguen-the C."/>
            <person name="Lereclus D."/>
            <person name="Richardson P."/>
            <person name="Wincker P."/>
            <person name="Weissenbach J."/>
            <person name="Ehrlich S.D."/>
            <person name="Sorokin A."/>
        </authorList>
    </citation>
    <scope>NUCLEOTIDE SEQUENCE [LARGE SCALE GENOMIC DNA]</scope>
    <source>
        <strain>KBAB4</strain>
    </source>
</reference>
<keyword id="KW-0963">Cytoplasm</keyword>
<keyword id="KW-0378">Hydrolase</keyword>
<keyword id="KW-0694">RNA-binding</keyword>
<keyword id="KW-0820">tRNA-binding</keyword>
<gene>
    <name evidence="1" type="primary">dtd</name>
    <name type="ordered locus">BcerKBAB4_4253</name>
</gene>
<protein>
    <recommendedName>
        <fullName evidence="1">D-aminoacyl-tRNA deacylase</fullName>
        <shortName evidence="1">DTD</shortName>
        <ecNumber evidence="1">3.1.1.96</ecNumber>
    </recommendedName>
    <alternativeName>
        <fullName evidence="1">Gly-tRNA(Ala) deacylase</fullName>
    </alternativeName>
</protein>
<proteinExistence type="inferred from homology"/>
<name>DTD_BACMK</name>
<comment type="function">
    <text evidence="1">An aminoacyl-tRNA editing enzyme that deacylates mischarged D-aminoacyl-tRNAs. Also deacylates mischarged glycyl-tRNA(Ala), protecting cells against glycine mischarging by AlaRS. Acts via tRNA-based rather than protein-based catalysis; rejects L-amino acids rather than detecting D-amino acids in the active site. By recycling D-aminoacyl-tRNA to D-amino acids and free tRNA molecules, this enzyme counteracts the toxicity associated with the formation of D-aminoacyl-tRNA entities in vivo and helps enforce protein L-homochirality.</text>
</comment>
<comment type="catalytic activity">
    <reaction evidence="1">
        <text>glycyl-tRNA(Ala) + H2O = tRNA(Ala) + glycine + H(+)</text>
        <dbReference type="Rhea" id="RHEA:53744"/>
        <dbReference type="Rhea" id="RHEA-COMP:9657"/>
        <dbReference type="Rhea" id="RHEA-COMP:13640"/>
        <dbReference type="ChEBI" id="CHEBI:15377"/>
        <dbReference type="ChEBI" id="CHEBI:15378"/>
        <dbReference type="ChEBI" id="CHEBI:57305"/>
        <dbReference type="ChEBI" id="CHEBI:78442"/>
        <dbReference type="ChEBI" id="CHEBI:78522"/>
        <dbReference type="EC" id="3.1.1.96"/>
    </reaction>
</comment>
<comment type="catalytic activity">
    <reaction evidence="1">
        <text>a D-aminoacyl-tRNA + H2O = a tRNA + a D-alpha-amino acid + H(+)</text>
        <dbReference type="Rhea" id="RHEA:13953"/>
        <dbReference type="Rhea" id="RHEA-COMP:10123"/>
        <dbReference type="Rhea" id="RHEA-COMP:10124"/>
        <dbReference type="ChEBI" id="CHEBI:15377"/>
        <dbReference type="ChEBI" id="CHEBI:15378"/>
        <dbReference type="ChEBI" id="CHEBI:59871"/>
        <dbReference type="ChEBI" id="CHEBI:78442"/>
        <dbReference type="ChEBI" id="CHEBI:79333"/>
        <dbReference type="EC" id="3.1.1.96"/>
    </reaction>
</comment>
<comment type="subunit">
    <text evidence="1">Homodimer.</text>
</comment>
<comment type="subcellular location">
    <subcellularLocation>
        <location evidence="1">Cytoplasm</location>
    </subcellularLocation>
</comment>
<comment type="domain">
    <text evidence="1">A Gly-cisPro motif from one monomer fits into the active site of the other monomer to allow specific chiral rejection of L-amino acids.</text>
</comment>
<comment type="similarity">
    <text evidence="1">Belongs to the DTD family.</text>
</comment>
<accession>A9VIN2</accession>
<evidence type="ECO:0000255" key="1">
    <source>
        <dbReference type="HAMAP-Rule" id="MF_00518"/>
    </source>
</evidence>
<sequence>MRVVLQRSKEASVTVDGEIVGQIPFGLTLLVGITHEDTEKDATYIAEKIANLRIFEDESGKMNHSVLDMKGQVLSISQFTLYGDCRKGRRPNFMDAAKPDYAEHLYDFFNEEVRKQGLHVETGQFGAMMDVSLINDGPVTLIVESK</sequence>
<feature type="chain" id="PRO_1000127495" description="D-aminoacyl-tRNA deacylase">
    <location>
        <begin position="1"/>
        <end position="146"/>
    </location>
</feature>
<feature type="short sequence motif" description="Gly-cisPro motif, important for rejection of L-amino acids" evidence="1">
    <location>
        <begin position="137"/>
        <end position="138"/>
    </location>
</feature>
<dbReference type="EC" id="3.1.1.96" evidence="1"/>
<dbReference type="EMBL" id="CP000903">
    <property type="protein sequence ID" value="ABY45412.1"/>
    <property type="molecule type" value="Genomic_DNA"/>
</dbReference>
<dbReference type="RefSeq" id="WP_002015302.1">
    <property type="nucleotide sequence ID" value="NC_010184.1"/>
</dbReference>
<dbReference type="SMR" id="A9VIN2"/>
<dbReference type="KEGG" id="bwe:BcerKBAB4_4253"/>
<dbReference type="eggNOG" id="COG1490">
    <property type="taxonomic scope" value="Bacteria"/>
</dbReference>
<dbReference type="HOGENOM" id="CLU_076901_1_0_9"/>
<dbReference type="Proteomes" id="UP000002154">
    <property type="component" value="Chromosome"/>
</dbReference>
<dbReference type="GO" id="GO:0005737">
    <property type="term" value="C:cytoplasm"/>
    <property type="evidence" value="ECO:0007669"/>
    <property type="project" value="UniProtKB-SubCell"/>
</dbReference>
<dbReference type="GO" id="GO:0051500">
    <property type="term" value="F:D-tyrosyl-tRNA(Tyr) deacylase activity"/>
    <property type="evidence" value="ECO:0007669"/>
    <property type="project" value="TreeGrafter"/>
</dbReference>
<dbReference type="GO" id="GO:0106026">
    <property type="term" value="F:Gly-tRNA(Ala) deacylase activity"/>
    <property type="evidence" value="ECO:0007669"/>
    <property type="project" value="UniProtKB-UniRule"/>
</dbReference>
<dbReference type="GO" id="GO:0043908">
    <property type="term" value="F:Ser(Gly)-tRNA(Ala) hydrolase activity"/>
    <property type="evidence" value="ECO:0007669"/>
    <property type="project" value="UniProtKB-UniRule"/>
</dbReference>
<dbReference type="GO" id="GO:0000049">
    <property type="term" value="F:tRNA binding"/>
    <property type="evidence" value="ECO:0007669"/>
    <property type="project" value="UniProtKB-UniRule"/>
</dbReference>
<dbReference type="GO" id="GO:0019478">
    <property type="term" value="P:D-amino acid catabolic process"/>
    <property type="evidence" value="ECO:0007669"/>
    <property type="project" value="UniProtKB-UniRule"/>
</dbReference>
<dbReference type="CDD" id="cd00563">
    <property type="entry name" value="Dtyr_deacylase"/>
    <property type="match status" value="1"/>
</dbReference>
<dbReference type="FunFam" id="3.50.80.10:FF:000001">
    <property type="entry name" value="D-aminoacyl-tRNA deacylase"/>
    <property type="match status" value="1"/>
</dbReference>
<dbReference type="Gene3D" id="3.50.80.10">
    <property type="entry name" value="D-tyrosyl-tRNA(Tyr) deacylase"/>
    <property type="match status" value="1"/>
</dbReference>
<dbReference type="HAMAP" id="MF_00518">
    <property type="entry name" value="Deacylase_Dtd"/>
    <property type="match status" value="1"/>
</dbReference>
<dbReference type="InterPro" id="IPR003732">
    <property type="entry name" value="Daa-tRNA_deacyls_DTD"/>
</dbReference>
<dbReference type="InterPro" id="IPR023509">
    <property type="entry name" value="DTD-like_sf"/>
</dbReference>
<dbReference type="NCBIfam" id="TIGR00256">
    <property type="entry name" value="D-aminoacyl-tRNA deacylase"/>
    <property type="match status" value="1"/>
</dbReference>
<dbReference type="PANTHER" id="PTHR10472:SF5">
    <property type="entry name" value="D-AMINOACYL-TRNA DEACYLASE 1"/>
    <property type="match status" value="1"/>
</dbReference>
<dbReference type="PANTHER" id="PTHR10472">
    <property type="entry name" value="D-TYROSYL-TRNA TYR DEACYLASE"/>
    <property type="match status" value="1"/>
</dbReference>
<dbReference type="Pfam" id="PF02580">
    <property type="entry name" value="Tyr_Deacylase"/>
    <property type="match status" value="1"/>
</dbReference>
<dbReference type="SUPFAM" id="SSF69500">
    <property type="entry name" value="DTD-like"/>
    <property type="match status" value="1"/>
</dbReference>